<dbReference type="EMBL" id="M95288">
    <property type="protein sequence ID" value="AAA27333.1"/>
    <property type="molecule type" value="Genomic_DNA"/>
</dbReference>
<dbReference type="EMBL" id="M61118">
    <property type="protein sequence ID" value="AAA27320.1"/>
    <property type="molecule type" value="Genomic_DNA"/>
</dbReference>
<dbReference type="PIR" id="A40007">
    <property type="entry name" value="A40007"/>
</dbReference>
<dbReference type="RefSeq" id="WP_011618463.1">
    <property type="nucleotide sequence ID" value="NZ_CP011941.1"/>
</dbReference>
<dbReference type="SMR" id="P27646"/>
<dbReference type="STRING" id="32052.WB44_13695"/>
<dbReference type="OrthoDB" id="466183at2"/>
<dbReference type="GO" id="GO:0030089">
    <property type="term" value="C:phycobilisome"/>
    <property type="evidence" value="ECO:0007669"/>
    <property type="project" value="UniProtKB-KW"/>
</dbReference>
<dbReference type="GO" id="GO:0031676">
    <property type="term" value="C:plasma membrane-derived thylakoid membrane"/>
    <property type="evidence" value="ECO:0007669"/>
    <property type="project" value="UniProtKB-SubCell"/>
</dbReference>
<dbReference type="GO" id="GO:0015979">
    <property type="term" value="P:photosynthesis"/>
    <property type="evidence" value="ECO:0007669"/>
    <property type="project" value="UniProtKB-KW"/>
</dbReference>
<dbReference type="CDD" id="cd14769">
    <property type="entry name" value="PE_alpha"/>
    <property type="match status" value="1"/>
</dbReference>
<dbReference type="Gene3D" id="1.10.490.20">
    <property type="entry name" value="Phycocyanins"/>
    <property type="match status" value="1"/>
</dbReference>
<dbReference type="InterPro" id="IPR009050">
    <property type="entry name" value="Globin-like_sf"/>
</dbReference>
<dbReference type="InterPro" id="IPR012128">
    <property type="entry name" value="Phycobilisome_asu/bsu"/>
</dbReference>
<dbReference type="InterPro" id="IPR038719">
    <property type="entry name" value="Phycobilisome_asu/bsu_sf"/>
</dbReference>
<dbReference type="PANTHER" id="PTHR34011:SF4">
    <property type="entry name" value="C-PHYCOCYANIN ALPHA SUBUNIT"/>
    <property type="match status" value="1"/>
</dbReference>
<dbReference type="PANTHER" id="PTHR34011">
    <property type="entry name" value="PHYCOBILISOME 32.1 KDA LINKER POLYPEPTIDE, PHYCOCYANIN-ASSOCIATED, ROD 2-RELATED"/>
    <property type="match status" value="1"/>
</dbReference>
<dbReference type="Pfam" id="PF00502">
    <property type="entry name" value="Phycobilisome"/>
    <property type="match status" value="1"/>
</dbReference>
<dbReference type="PIRSF" id="PIRSF000081">
    <property type="entry name" value="Phycocyanin"/>
    <property type="match status" value="1"/>
</dbReference>
<dbReference type="SUPFAM" id="SSF46458">
    <property type="entry name" value="Globin-like"/>
    <property type="match status" value="1"/>
</dbReference>
<gene>
    <name type="primary">mpeA</name>
</gene>
<accession>P27646</accession>
<organism>
    <name type="scientific">Synechococcus sp. (strain WH8020)</name>
    <dbReference type="NCBI Taxonomy" id="32052"/>
    <lineage>
        <taxon>Bacteria</taxon>
        <taxon>Bacillati</taxon>
        <taxon>Cyanobacteriota</taxon>
        <taxon>Cyanophyceae</taxon>
        <taxon>Synechococcales</taxon>
        <taxon>Synechococcaceae</taxon>
        <taxon>Synechococcus</taxon>
    </lineage>
</organism>
<protein>
    <recommendedName>
        <fullName>C-phycoerythrin class 2 subunit alpha</fullName>
    </recommendedName>
    <alternativeName>
        <fullName>C-phycoerythrin class II alpha chain</fullName>
    </alternativeName>
</protein>
<name>PHEA2_SYNPY</name>
<feature type="chain" id="PRO_0000199185" description="C-phycoerythrin class 2 subunit alpha">
    <location>
        <begin position="1"/>
        <end position="165"/>
    </location>
</feature>
<feature type="binding site" description="covalent">
    <location>
        <position position="75"/>
    </location>
    <ligand>
        <name>phycourobilin</name>
        <dbReference type="ChEBI" id="CHEBI:189062"/>
    </ligand>
</feature>
<feature type="binding site" description="covalent">
    <location>
        <position position="83"/>
    </location>
    <ligand>
        <name>(2R,3E)-phycoerythrobilin</name>
        <dbReference type="ChEBI" id="CHEBI:85276"/>
        <label>1</label>
    </ligand>
</feature>
<feature type="binding site" description="covalent">
    <location>
        <position position="140"/>
    </location>
    <ligand>
        <name>(2R,3E)-phycoerythrobilin</name>
        <dbReference type="ChEBI" id="CHEBI:85276"/>
        <label>2</label>
    </ligand>
</feature>
<proteinExistence type="evidence at protein level"/>
<keyword id="KW-0042">Antenna complex</keyword>
<keyword id="KW-0089">Bile pigment</keyword>
<keyword id="KW-0157">Chromophore</keyword>
<keyword id="KW-0903">Direct protein sequencing</keyword>
<keyword id="KW-0249">Electron transport</keyword>
<keyword id="KW-0472">Membrane</keyword>
<keyword id="KW-0602">Photosynthesis</keyword>
<keyword id="KW-0605">Phycobilisome</keyword>
<keyword id="KW-0793">Thylakoid</keyword>
<keyword id="KW-0813">Transport</keyword>
<evidence type="ECO:0000305" key="1"/>
<reference key="1">
    <citation type="journal article" date="1993" name="Plant Mol. Biol.">
        <title>Genes of the R-phycocyanin II locus of marine Synechococcus spp., and comparison of protein-chromophore interactions in phycocyanins differing in bilin composition.</title>
        <authorList>
            <person name="de Lorimier R."/>
            <person name="Wilbanks S.M."/>
            <person name="Glazer A.N."/>
        </authorList>
    </citation>
    <scope>NUCLEOTIDE SEQUENCE [GENOMIC DNA]</scope>
</reference>
<reference key="2">
    <citation type="journal article" date="1991" name="J. Biol. Chem.">
        <title>Phycoerythrins of marine unicellular cyanobacteria. III. Sequence of a class II phycoerythrin.</title>
        <authorList>
            <person name="Wilbanks S.M."/>
            <person name="de Lorimier R."/>
            <person name="Glazer A.N."/>
        </authorList>
    </citation>
    <scope>NUCLEOTIDE SEQUENCE [GENOMIC DNA]</scope>
</reference>
<reference key="3">
    <citation type="journal article" date="1991" name="J. Biol. Chem.">
        <title>Phycoerythrins of marine unicellular cyanobacteria. I. Bilin types and locations and energy transfer pathways in Synechococcus spp. phycoerythrins.</title>
        <authorList>
            <person name="Ong L.J."/>
            <person name="Glazer A.N."/>
        </authorList>
    </citation>
    <scope>PARTIAL PROTEIN SEQUENCE</scope>
    <scope>CHROMOPHORE BINDING</scope>
</reference>
<comment type="function">
    <text>Light-harvesting photosynthetic bile pigment-protein from the phycobiliprotein complex.</text>
</comment>
<comment type="subunit">
    <text>Heterodimer of an alpha and a beta chain.</text>
</comment>
<comment type="subcellular location">
    <subcellularLocation>
        <location>Cellular thylakoid membrane</location>
        <topology>Peripheral membrane protein</topology>
        <orientation>Cytoplasmic side</orientation>
    </subcellularLocation>
    <text>Forms the periphery of the phycobilisome rod.</text>
</comment>
<comment type="PTM">
    <text>Contains two covalently linked phycoerythrobilin chromophores and one covalently linked phycourobilin chromophore.</text>
</comment>
<comment type="similarity">
    <text evidence="1">Belongs to the phycobiliprotein family.</text>
</comment>
<sequence length="165" mass="17670">MKSVITTVVGAADSASRFPSASDMESVQGSIQRAAARLEAAEKLSANYDAIAQRAVDAVYAQYPNGATGRQPRQCATEGKEKCKRDFVHYLRLINYCLVTGGTGPLDELAINGQKEVYKALSIDAGTYVAGFSNMRNDGCSPRDMSAQALTAYNTLLDYVINSLG</sequence>